<comment type="function">
    <text evidence="1">Involved in ribosome biogenesis; more specifically in 18S rRNA pseudouridylation and in cleavage of pre-rRNA.</text>
</comment>
<comment type="similarity">
    <text evidence="1">Belongs to the NOP10 family.</text>
</comment>
<proteinExistence type="inferred from homology"/>
<keyword id="KW-0687">Ribonucleoprotein</keyword>
<keyword id="KW-0690">Ribosome biogenesis</keyword>
<keyword id="KW-0698">rRNA processing</keyword>
<accession>A6UUW5</accession>
<organism>
    <name type="scientific">Methanococcus aeolicus (strain ATCC BAA-1280 / DSM 17508 / OCM 812 / Nankai-3)</name>
    <dbReference type="NCBI Taxonomy" id="419665"/>
    <lineage>
        <taxon>Archaea</taxon>
        <taxon>Methanobacteriati</taxon>
        <taxon>Methanobacteriota</taxon>
        <taxon>Methanomada group</taxon>
        <taxon>Methanococci</taxon>
        <taxon>Methanococcales</taxon>
        <taxon>Methanococcaceae</taxon>
        <taxon>Methanococcus</taxon>
    </lineage>
</organism>
<evidence type="ECO:0000255" key="1">
    <source>
        <dbReference type="HAMAP-Rule" id="MF_00803"/>
    </source>
</evidence>
<feature type="chain" id="PRO_1000148550" description="Ribosome biogenesis protein Nop10">
    <location>
        <begin position="1"/>
        <end position="51"/>
    </location>
</feature>
<gene>
    <name evidence="1" type="primary">nop10</name>
    <name type="ordered locus">Maeo_0704</name>
</gene>
<sequence>MRMKKCPNCKNYTLNTICQCGEKTITVKPPRYSPTDKYGKYRRMLKKSIKQ</sequence>
<protein>
    <recommendedName>
        <fullName evidence="1">Ribosome biogenesis protein Nop10</fullName>
    </recommendedName>
</protein>
<reference key="1">
    <citation type="submission" date="2007-06" db="EMBL/GenBank/DDBJ databases">
        <title>Complete sequence of Methanococcus aeolicus Nankai-3.</title>
        <authorList>
            <consortium name="US DOE Joint Genome Institute"/>
            <person name="Copeland A."/>
            <person name="Lucas S."/>
            <person name="Lapidus A."/>
            <person name="Barry K."/>
            <person name="Glavina del Rio T."/>
            <person name="Dalin E."/>
            <person name="Tice H."/>
            <person name="Pitluck S."/>
            <person name="Chain P."/>
            <person name="Malfatti S."/>
            <person name="Shin M."/>
            <person name="Vergez L."/>
            <person name="Schmutz J."/>
            <person name="Larimer F."/>
            <person name="Land M."/>
            <person name="Hauser L."/>
            <person name="Kyrpides N."/>
            <person name="Lykidis A."/>
            <person name="Sieprawska-Lupa M."/>
            <person name="Whitman W.B."/>
            <person name="Richardson P."/>
        </authorList>
    </citation>
    <scope>NUCLEOTIDE SEQUENCE [LARGE SCALE GENOMIC DNA]</scope>
    <source>
        <strain>ATCC BAA-1280 / DSM 17508 / OCM 812 / Nankai-3</strain>
    </source>
</reference>
<dbReference type="EMBL" id="CP000743">
    <property type="protein sequence ID" value="ABR56287.1"/>
    <property type="molecule type" value="Genomic_DNA"/>
</dbReference>
<dbReference type="RefSeq" id="WP_011973419.1">
    <property type="nucleotide sequence ID" value="NC_009635.1"/>
</dbReference>
<dbReference type="SMR" id="A6UUW5"/>
<dbReference type="STRING" id="419665.Maeo_0704"/>
<dbReference type="GeneID" id="5326986"/>
<dbReference type="KEGG" id="mae:Maeo_0704"/>
<dbReference type="eggNOG" id="arCOG00906">
    <property type="taxonomic scope" value="Archaea"/>
</dbReference>
<dbReference type="HOGENOM" id="CLU_196480_1_0_2"/>
<dbReference type="OrthoDB" id="7259at2157"/>
<dbReference type="Proteomes" id="UP000001106">
    <property type="component" value="Chromosome"/>
</dbReference>
<dbReference type="GO" id="GO:1990904">
    <property type="term" value="C:ribonucleoprotein complex"/>
    <property type="evidence" value="ECO:0007669"/>
    <property type="project" value="UniProtKB-KW"/>
</dbReference>
<dbReference type="GO" id="GO:0030515">
    <property type="term" value="F:snoRNA binding"/>
    <property type="evidence" value="ECO:0007669"/>
    <property type="project" value="InterPro"/>
</dbReference>
<dbReference type="GO" id="GO:0001522">
    <property type="term" value="P:pseudouridine synthesis"/>
    <property type="evidence" value="ECO:0007669"/>
    <property type="project" value="InterPro"/>
</dbReference>
<dbReference type="GO" id="GO:0006364">
    <property type="term" value="P:rRNA processing"/>
    <property type="evidence" value="ECO:0007669"/>
    <property type="project" value="UniProtKB-UniRule"/>
</dbReference>
<dbReference type="Gene3D" id="2.20.28.40">
    <property type="entry name" value="H/ACA ribonucleoprotein complex, subunit Nop10"/>
    <property type="match status" value="1"/>
</dbReference>
<dbReference type="HAMAP" id="MF_00803">
    <property type="entry name" value="Nop10"/>
    <property type="match status" value="1"/>
</dbReference>
<dbReference type="InterPro" id="IPR007264">
    <property type="entry name" value="H/ACA_rnp_Nop10"/>
</dbReference>
<dbReference type="InterPro" id="IPR036756">
    <property type="entry name" value="H/ACA_rnp_Nop10_sf"/>
</dbReference>
<dbReference type="InterPro" id="IPR023532">
    <property type="entry name" value="Nop10_arc-typ"/>
</dbReference>
<dbReference type="NCBIfam" id="NF009623">
    <property type="entry name" value="PRK13130.1"/>
    <property type="match status" value="1"/>
</dbReference>
<dbReference type="Pfam" id="PF04135">
    <property type="entry name" value="Nop10p"/>
    <property type="match status" value="1"/>
</dbReference>
<dbReference type="SUPFAM" id="SSF144210">
    <property type="entry name" value="Nop10-like SnoRNP"/>
    <property type="match status" value="1"/>
</dbReference>
<name>NOP10_META3</name>